<comment type="function">
    <text evidence="1">Produces ATP from ADP in the presence of a proton gradient across the membrane. The catalytic sites are hosted primarily by the beta subunits.</text>
</comment>
<comment type="catalytic activity">
    <reaction evidence="1">
        <text>ATP + H2O + 4 H(+)(in) = ADP + phosphate + 5 H(+)(out)</text>
        <dbReference type="Rhea" id="RHEA:57720"/>
        <dbReference type="ChEBI" id="CHEBI:15377"/>
        <dbReference type="ChEBI" id="CHEBI:15378"/>
        <dbReference type="ChEBI" id="CHEBI:30616"/>
        <dbReference type="ChEBI" id="CHEBI:43474"/>
        <dbReference type="ChEBI" id="CHEBI:456216"/>
        <dbReference type="EC" id="7.1.2.2"/>
    </reaction>
</comment>
<comment type="subunit">
    <text evidence="1">F-type ATPases have 2 components, CF(1) - the catalytic core - and CF(0) - the membrane proton channel. CF(1) has five subunits: alpha(3), beta(3), gamma(1), delta(1), epsilon(1). CF(0) has four main subunits: a(1), b(1), b'(1) and c(9-12).</text>
</comment>
<comment type="subcellular location">
    <subcellularLocation>
        <location evidence="1">Cellular thylakoid membrane</location>
        <topology evidence="1">Peripheral membrane protein</topology>
    </subcellularLocation>
</comment>
<comment type="similarity">
    <text evidence="1">Belongs to the ATPase alpha/beta chains family.</text>
</comment>
<keyword id="KW-0066">ATP synthesis</keyword>
<keyword id="KW-0067">ATP-binding</keyword>
<keyword id="KW-0139">CF(1)</keyword>
<keyword id="KW-0375">Hydrogen ion transport</keyword>
<keyword id="KW-0406">Ion transport</keyword>
<keyword id="KW-0472">Membrane</keyword>
<keyword id="KW-0547">Nucleotide-binding</keyword>
<keyword id="KW-1185">Reference proteome</keyword>
<keyword id="KW-0793">Thylakoid</keyword>
<keyword id="KW-1278">Translocase</keyword>
<keyword id="KW-0813">Transport</keyword>
<evidence type="ECO:0000255" key="1">
    <source>
        <dbReference type="HAMAP-Rule" id="MF_01347"/>
    </source>
</evidence>
<reference key="1">
    <citation type="journal article" date="2006" name="Proc. Natl. Acad. Sci. U.S.A.">
        <title>Genome sequence of Synechococcus CC9311: insights into adaptation to a coastal environment.</title>
        <authorList>
            <person name="Palenik B."/>
            <person name="Ren Q."/>
            <person name="Dupont C.L."/>
            <person name="Myers G.S."/>
            <person name="Heidelberg J.F."/>
            <person name="Badger J.H."/>
            <person name="Madupu R."/>
            <person name="Nelson W.C."/>
            <person name="Brinkac L.M."/>
            <person name="Dodson R.J."/>
            <person name="Durkin A.S."/>
            <person name="Daugherty S.C."/>
            <person name="Sullivan S.A."/>
            <person name="Khouri H."/>
            <person name="Mohamoud Y."/>
            <person name="Halpin R."/>
            <person name="Paulsen I.T."/>
        </authorList>
    </citation>
    <scope>NUCLEOTIDE SEQUENCE [LARGE SCALE GENOMIC DNA]</scope>
    <source>
        <strain>CC9311</strain>
    </source>
</reference>
<organism>
    <name type="scientific">Synechococcus sp. (strain CC9311)</name>
    <dbReference type="NCBI Taxonomy" id="64471"/>
    <lineage>
        <taxon>Bacteria</taxon>
        <taxon>Bacillati</taxon>
        <taxon>Cyanobacteriota</taxon>
        <taxon>Cyanophyceae</taxon>
        <taxon>Synechococcales</taxon>
        <taxon>Synechococcaceae</taxon>
        <taxon>Synechococcus</taxon>
    </lineage>
</organism>
<name>ATPB_SYNS3</name>
<protein>
    <recommendedName>
        <fullName evidence="1">ATP synthase subunit beta</fullName>
        <ecNumber evidence="1">7.1.2.2</ecNumber>
    </recommendedName>
    <alternativeName>
        <fullName evidence="1">ATP synthase F1 sector subunit beta</fullName>
    </alternativeName>
    <alternativeName>
        <fullName evidence="1">F-ATPase subunit beta</fullName>
    </alternativeName>
</protein>
<feature type="chain" id="PRO_1000055175" description="ATP synthase subunit beta">
    <location>
        <begin position="1"/>
        <end position="487"/>
    </location>
</feature>
<feature type="binding site" evidence="1">
    <location>
        <begin position="164"/>
        <end position="171"/>
    </location>
    <ligand>
        <name>ATP</name>
        <dbReference type="ChEBI" id="CHEBI:30616"/>
    </ligand>
</feature>
<gene>
    <name evidence="1" type="primary">atpD</name>
    <name evidence="1" type="synonym">atpB</name>
    <name type="ordered locus">sync_2284</name>
</gene>
<proteinExistence type="inferred from homology"/>
<dbReference type="EC" id="7.1.2.2" evidence="1"/>
<dbReference type="EMBL" id="CP000435">
    <property type="protein sequence ID" value="ABI47126.1"/>
    <property type="molecule type" value="Genomic_DNA"/>
</dbReference>
<dbReference type="RefSeq" id="WP_011620193.1">
    <property type="nucleotide sequence ID" value="NC_008319.1"/>
</dbReference>
<dbReference type="SMR" id="Q0I7U1"/>
<dbReference type="STRING" id="64471.sync_2284"/>
<dbReference type="KEGG" id="syg:sync_2284"/>
<dbReference type="eggNOG" id="COG0055">
    <property type="taxonomic scope" value="Bacteria"/>
</dbReference>
<dbReference type="HOGENOM" id="CLU_022398_0_2_3"/>
<dbReference type="OrthoDB" id="9801639at2"/>
<dbReference type="Proteomes" id="UP000001961">
    <property type="component" value="Chromosome"/>
</dbReference>
<dbReference type="GO" id="GO:0031676">
    <property type="term" value="C:plasma membrane-derived thylakoid membrane"/>
    <property type="evidence" value="ECO:0007669"/>
    <property type="project" value="UniProtKB-SubCell"/>
</dbReference>
<dbReference type="GO" id="GO:0045259">
    <property type="term" value="C:proton-transporting ATP synthase complex"/>
    <property type="evidence" value="ECO:0007669"/>
    <property type="project" value="UniProtKB-KW"/>
</dbReference>
<dbReference type="GO" id="GO:0005524">
    <property type="term" value="F:ATP binding"/>
    <property type="evidence" value="ECO:0007669"/>
    <property type="project" value="UniProtKB-UniRule"/>
</dbReference>
<dbReference type="GO" id="GO:0016887">
    <property type="term" value="F:ATP hydrolysis activity"/>
    <property type="evidence" value="ECO:0007669"/>
    <property type="project" value="InterPro"/>
</dbReference>
<dbReference type="GO" id="GO:0046933">
    <property type="term" value="F:proton-transporting ATP synthase activity, rotational mechanism"/>
    <property type="evidence" value="ECO:0007669"/>
    <property type="project" value="UniProtKB-UniRule"/>
</dbReference>
<dbReference type="CDD" id="cd18110">
    <property type="entry name" value="ATP-synt_F1_beta_C"/>
    <property type="match status" value="1"/>
</dbReference>
<dbReference type="CDD" id="cd18115">
    <property type="entry name" value="ATP-synt_F1_beta_N"/>
    <property type="match status" value="1"/>
</dbReference>
<dbReference type="CDD" id="cd01133">
    <property type="entry name" value="F1-ATPase_beta_CD"/>
    <property type="match status" value="1"/>
</dbReference>
<dbReference type="FunFam" id="1.10.1140.10:FF:000001">
    <property type="entry name" value="ATP synthase subunit beta"/>
    <property type="match status" value="1"/>
</dbReference>
<dbReference type="FunFam" id="2.40.10.170:FF:000005">
    <property type="entry name" value="ATP synthase subunit beta"/>
    <property type="match status" value="1"/>
</dbReference>
<dbReference type="FunFam" id="3.40.50.300:FF:000004">
    <property type="entry name" value="ATP synthase subunit beta"/>
    <property type="match status" value="1"/>
</dbReference>
<dbReference type="Gene3D" id="2.40.10.170">
    <property type="match status" value="1"/>
</dbReference>
<dbReference type="Gene3D" id="1.10.1140.10">
    <property type="entry name" value="Bovine Mitochondrial F1-atpase, Atp Synthase Beta Chain, Chain D, domain 3"/>
    <property type="match status" value="1"/>
</dbReference>
<dbReference type="Gene3D" id="3.40.50.300">
    <property type="entry name" value="P-loop containing nucleotide triphosphate hydrolases"/>
    <property type="match status" value="1"/>
</dbReference>
<dbReference type="HAMAP" id="MF_01347">
    <property type="entry name" value="ATP_synth_beta_bact"/>
    <property type="match status" value="1"/>
</dbReference>
<dbReference type="InterPro" id="IPR003593">
    <property type="entry name" value="AAA+_ATPase"/>
</dbReference>
<dbReference type="InterPro" id="IPR055190">
    <property type="entry name" value="ATP-synt_VA_C"/>
</dbReference>
<dbReference type="InterPro" id="IPR005722">
    <property type="entry name" value="ATP_synth_F1_bsu"/>
</dbReference>
<dbReference type="InterPro" id="IPR020003">
    <property type="entry name" value="ATPase_a/bsu_AS"/>
</dbReference>
<dbReference type="InterPro" id="IPR050053">
    <property type="entry name" value="ATPase_alpha/beta_chains"/>
</dbReference>
<dbReference type="InterPro" id="IPR004100">
    <property type="entry name" value="ATPase_F1/V1/A1_a/bsu_N"/>
</dbReference>
<dbReference type="InterPro" id="IPR036121">
    <property type="entry name" value="ATPase_F1/V1/A1_a/bsu_N_sf"/>
</dbReference>
<dbReference type="InterPro" id="IPR000194">
    <property type="entry name" value="ATPase_F1/V1/A1_a/bsu_nucl-bd"/>
</dbReference>
<dbReference type="InterPro" id="IPR024034">
    <property type="entry name" value="ATPase_F1/V1_b/a_C"/>
</dbReference>
<dbReference type="InterPro" id="IPR027417">
    <property type="entry name" value="P-loop_NTPase"/>
</dbReference>
<dbReference type="NCBIfam" id="TIGR01039">
    <property type="entry name" value="atpD"/>
    <property type="match status" value="1"/>
</dbReference>
<dbReference type="PANTHER" id="PTHR15184">
    <property type="entry name" value="ATP SYNTHASE"/>
    <property type="match status" value="1"/>
</dbReference>
<dbReference type="PANTHER" id="PTHR15184:SF71">
    <property type="entry name" value="ATP SYNTHASE SUBUNIT BETA, MITOCHONDRIAL"/>
    <property type="match status" value="1"/>
</dbReference>
<dbReference type="Pfam" id="PF00006">
    <property type="entry name" value="ATP-synt_ab"/>
    <property type="match status" value="1"/>
</dbReference>
<dbReference type="Pfam" id="PF02874">
    <property type="entry name" value="ATP-synt_ab_N"/>
    <property type="match status" value="1"/>
</dbReference>
<dbReference type="Pfam" id="PF22919">
    <property type="entry name" value="ATP-synt_VA_C"/>
    <property type="match status" value="1"/>
</dbReference>
<dbReference type="SMART" id="SM00382">
    <property type="entry name" value="AAA"/>
    <property type="match status" value="1"/>
</dbReference>
<dbReference type="SUPFAM" id="SSF47917">
    <property type="entry name" value="C-terminal domain of alpha and beta subunits of F1 ATP synthase"/>
    <property type="match status" value="1"/>
</dbReference>
<dbReference type="SUPFAM" id="SSF50615">
    <property type="entry name" value="N-terminal domain of alpha and beta subunits of F1 ATP synthase"/>
    <property type="match status" value="1"/>
</dbReference>
<dbReference type="SUPFAM" id="SSF52540">
    <property type="entry name" value="P-loop containing nucleoside triphosphate hydrolases"/>
    <property type="match status" value="1"/>
</dbReference>
<dbReference type="PROSITE" id="PS00152">
    <property type="entry name" value="ATPASE_ALPHA_BETA"/>
    <property type="match status" value="1"/>
</dbReference>
<accession>Q0I7U1</accession>
<sequence>MAAAAPASTGSKGVVRQVIGPVLDVEFPAGKLPKILNALRIEGTNTAGEAIGLTAEVQQLLGDHRVRAVAMSGTDGLVRGMEALDTGSPIAVPVGEATLGRIFNVLGEPVDEQGPVNTNVTSPIHREAPKLTELETKPKVFETGIKVIDLLAPYRQGGKIGLFGGAGVGKTVLIQELINNIAKEHGGVSVFGGVGERTREGNDLYEEFKESGVINADDLSKSKVALCYGQMNEPPGARMRVGLSALTMAEHFRDVNKQDVLLFVDNIFRFVQAGSEVSALLGRMPSAVGYQPTLGTDVGALQERVASTLEGSITSIQAVYVPADDLTDPAPATTFAHLDATTVLNRALASKGIYPAVDPLDSTSTMLQPAVVGDEHYRTARAVQSTLQRYKELQDIIAILGLDELSEDDRQTVDRARKIEKFLSQPFFVAEIFTGMPGKYVKLEDTISGFNQILAGDLDSLPEQSFYLVGNIDEVKAKAEKIAAESK</sequence>